<evidence type="ECO:0000255" key="1">
    <source>
        <dbReference type="HAMAP-Rule" id="MF_00300"/>
    </source>
</evidence>
<keyword id="KW-0028">Amino-acid biosynthesis</keyword>
<keyword id="KW-0057">Aromatic amino acid biosynthesis</keyword>
<keyword id="KW-0274">FAD</keyword>
<keyword id="KW-0285">Flavoprotein</keyword>
<keyword id="KW-0288">FMN</keyword>
<keyword id="KW-0456">Lyase</keyword>
<keyword id="KW-0521">NADP</keyword>
<comment type="function">
    <text evidence="1">Catalyzes the anti-1,4-elimination of the C-3 phosphate and the C-6 proR hydrogen from 5-enolpyruvylshikimate-3-phosphate (EPSP) to yield chorismate, which is the branch point compound that serves as the starting substrate for the three terminal pathways of aromatic amino acid biosynthesis. This reaction introduces a second double bond into the aromatic ring system.</text>
</comment>
<comment type="catalytic activity">
    <reaction evidence="1">
        <text>5-O-(1-carboxyvinyl)-3-phosphoshikimate = chorismate + phosphate</text>
        <dbReference type="Rhea" id="RHEA:21020"/>
        <dbReference type="ChEBI" id="CHEBI:29748"/>
        <dbReference type="ChEBI" id="CHEBI:43474"/>
        <dbReference type="ChEBI" id="CHEBI:57701"/>
        <dbReference type="EC" id="4.2.3.5"/>
    </reaction>
</comment>
<comment type="cofactor">
    <cofactor evidence="1">
        <name>FMNH2</name>
        <dbReference type="ChEBI" id="CHEBI:57618"/>
    </cofactor>
    <text evidence="1">Reduced FMN (FMNH(2)).</text>
</comment>
<comment type="pathway">
    <text evidence="1">Metabolic intermediate biosynthesis; chorismate biosynthesis; chorismate from D-erythrose 4-phosphate and phosphoenolpyruvate: step 7/7.</text>
</comment>
<comment type="subunit">
    <text evidence="1">Homotetramer.</text>
</comment>
<comment type="similarity">
    <text evidence="1">Belongs to the chorismate synthase family.</text>
</comment>
<protein>
    <recommendedName>
        <fullName evidence="1">Chorismate synthase</fullName>
        <shortName evidence="1">CS</shortName>
        <ecNumber evidence="1">4.2.3.5</ecNumber>
    </recommendedName>
    <alternativeName>
        <fullName evidence="1">5-enolpyruvylshikimate-3-phosphate phospholyase</fullName>
    </alternativeName>
</protein>
<reference key="1">
    <citation type="journal article" date="2007" name="PLoS Genet.">
        <title>Meningococcal genetic variation mechanisms viewed through comparative analysis of serogroup C strain FAM18.</title>
        <authorList>
            <person name="Bentley S.D."/>
            <person name="Vernikos G.S."/>
            <person name="Snyder L.A.S."/>
            <person name="Churcher C."/>
            <person name="Arrowsmith C."/>
            <person name="Chillingworth T."/>
            <person name="Cronin A."/>
            <person name="Davis P.H."/>
            <person name="Holroyd N.E."/>
            <person name="Jagels K."/>
            <person name="Maddison M."/>
            <person name="Moule S."/>
            <person name="Rabbinowitsch E."/>
            <person name="Sharp S."/>
            <person name="Unwin L."/>
            <person name="Whitehead S."/>
            <person name="Quail M.A."/>
            <person name="Achtman M."/>
            <person name="Barrell B.G."/>
            <person name="Saunders N.J."/>
            <person name="Parkhill J."/>
        </authorList>
    </citation>
    <scope>NUCLEOTIDE SEQUENCE [LARGE SCALE GENOMIC DNA]</scope>
    <source>
        <strain>ATCC 700532 / DSM 15464 / FAM18</strain>
    </source>
</reference>
<feature type="chain" id="PRO_1000022516" description="Chorismate synthase">
    <location>
        <begin position="1"/>
        <end position="366"/>
    </location>
</feature>
<feature type="binding site" evidence="1">
    <location>
        <position position="48"/>
    </location>
    <ligand>
        <name>NADP(+)</name>
        <dbReference type="ChEBI" id="CHEBI:58349"/>
    </ligand>
</feature>
<feature type="binding site" evidence="1">
    <location>
        <position position="54"/>
    </location>
    <ligand>
        <name>NADP(+)</name>
        <dbReference type="ChEBI" id="CHEBI:58349"/>
    </ligand>
</feature>
<feature type="binding site" evidence="1">
    <location>
        <begin position="125"/>
        <end position="127"/>
    </location>
    <ligand>
        <name>FMN</name>
        <dbReference type="ChEBI" id="CHEBI:58210"/>
    </ligand>
</feature>
<feature type="binding site" evidence="1">
    <location>
        <begin position="238"/>
        <end position="239"/>
    </location>
    <ligand>
        <name>FMN</name>
        <dbReference type="ChEBI" id="CHEBI:58210"/>
    </ligand>
</feature>
<feature type="binding site" evidence="1">
    <location>
        <position position="278"/>
    </location>
    <ligand>
        <name>FMN</name>
        <dbReference type="ChEBI" id="CHEBI:58210"/>
    </ligand>
</feature>
<feature type="binding site" evidence="1">
    <location>
        <begin position="293"/>
        <end position="297"/>
    </location>
    <ligand>
        <name>FMN</name>
        <dbReference type="ChEBI" id="CHEBI:58210"/>
    </ligand>
</feature>
<feature type="binding site" evidence="1">
    <location>
        <position position="319"/>
    </location>
    <ligand>
        <name>FMN</name>
        <dbReference type="ChEBI" id="CHEBI:58210"/>
    </ligand>
</feature>
<sequence length="366" mass="39393">MAGNTFGQLFTVTTFGESHGAGLGCIIDGCPPGLELSEADIQFDLDRRKPGTSRHVTQRRETDQVEILSGVFKGKTTGTPIALLIRNTDQRSKDYGNIAQSFRPGHADYTYWHKYGTRDYRGGGRSSARETAARVAAGAVAKKWLKEKFGTEITAYVTQVGEKEIRFEGCEHISQNPFFAANHSQIAELENYMDSVRKSLDSVGAKLHIEAANVPVGLGEPVFDRLDAEIAYAMMGINAVKGVEIGAGFDSVTQRGSEHGDELTPQGFLSNHSGGILGGISTGQDICVNIAIKPTSSIATPRRSIDINGNPIELATHGRHDPCVGLRAAPIAEAMLALVLIDHALRHRAQNADVAVDTPDIARSDK</sequence>
<gene>
    <name evidence="1" type="primary">aroC</name>
    <name type="ordered locus">NMC1598</name>
</gene>
<organism>
    <name type="scientific">Neisseria meningitidis serogroup C / serotype 2a (strain ATCC 700532 / DSM 15464 / FAM18)</name>
    <dbReference type="NCBI Taxonomy" id="272831"/>
    <lineage>
        <taxon>Bacteria</taxon>
        <taxon>Pseudomonadati</taxon>
        <taxon>Pseudomonadota</taxon>
        <taxon>Betaproteobacteria</taxon>
        <taxon>Neisseriales</taxon>
        <taxon>Neisseriaceae</taxon>
        <taxon>Neisseria</taxon>
    </lineage>
</organism>
<name>AROC_NEIMF</name>
<accession>A1KV89</accession>
<proteinExistence type="inferred from homology"/>
<dbReference type="EC" id="4.2.3.5" evidence="1"/>
<dbReference type="EMBL" id="AM421808">
    <property type="protein sequence ID" value="CAM10790.1"/>
    <property type="molecule type" value="Genomic_DNA"/>
</dbReference>
<dbReference type="RefSeq" id="WP_002220457.1">
    <property type="nucleotide sequence ID" value="NC_008767.1"/>
</dbReference>
<dbReference type="SMR" id="A1KV89"/>
<dbReference type="KEGG" id="nmc:NMC1598"/>
<dbReference type="HOGENOM" id="CLU_034547_0_2_4"/>
<dbReference type="UniPathway" id="UPA00053">
    <property type="reaction ID" value="UER00090"/>
</dbReference>
<dbReference type="Proteomes" id="UP000002286">
    <property type="component" value="Chromosome"/>
</dbReference>
<dbReference type="GO" id="GO:0005829">
    <property type="term" value="C:cytosol"/>
    <property type="evidence" value="ECO:0007669"/>
    <property type="project" value="TreeGrafter"/>
</dbReference>
<dbReference type="GO" id="GO:0004107">
    <property type="term" value="F:chorismate synthase activity"/>
    <property type="evidence" value="ECO:0007669"/>
    <property type="project" value="UniProtKB-UniRule"/>
</dbReference>
<dbReference type="GO" id="GO:0010181">
    <property type="term" value="F:FMN binding"/>
    <property type="evidence" value="ECO:0007669"/>
    <property type="project" value="TreeGrafter"/>
</dbReference>
<dbReference type="GO" id="GO:0008652">
    <property type="term" value="P:amino acid biosynthetic process"/>
    <property type="evidence" value="ECO:0007669"/>
    <property type="project" value="UniProtKB-KW"/>
</dbReference>
<dbReference type="GO" id="GO:0009073">
    <property type="term" value="P:aromatic amino acid family biosynthetic process"/>
    <property type="evidence" value="ECO:0007669"/>
    <property type="project" value="UniProtKB-KW"/>
</dbReference>
<dbReference type="GO" id="GO:0009423">
    <property type="term" value="P:chorismate biosynthetic process"/>
    <property type="evidence" value="ECO:0007669"/>
    <property type="project" value="UniProtKB-UniRule"/>
</dbReference>
<dbReference type="CDD" id="cd07304">
    <property type="entry name" value="Chorismate_synthase"/>
    <property type="match status" value="1"/>
</dbReference>
<dbReference type="FunFam" id="3.60.150.10:FF:000001">
    <property type="entry name" value="Chorismate synthase"/>
    <property type="match status" value="1"/>
</dbReference>
<dbReference type="Gene3D" id="3.60.150.10">
    <property type="entry name" value="Chorismate synthase AroC"/>
    <property type="match status" value="1"/>
</dbReference>
<dbReference type="HAMAP" id="MF_00300">
    <property type="entry name" value="Chorismate_synth"/>
    <property type="match status" value="1"/>
</dbReference>
<dbReference type="InterPro" id="IPR000453">
    <property type="entry name" value="Chorismate_synth"/>
</dbReference>
<dbReference type="InterPro" id="IPR035904">
    <property type="entry name" value="Chorismate_synth_AroC_sf"/>
</dbReference>
<dbReference type="InterPro" id="IPR020541">
    <property type="entry name" value="Chorismate_synthase_CS"/>
</dbReference>
<dbReference type="NCBIfam" id="TIGR00033">
    <property type="entry name" value="aroC"/>
    <property type="match status" value="1"/>
</dbReference>
<dbReference type="NCBIfam" id="NF003793">
    <property type="entry name" value="PRK05382.1"/>
    <property type="match status" value="1"/>
</dbReference>
<dbReference type="PANTHER" id="PTHR21085">
    <property type="entry name" value="CHORISMATE SYNTHASE"/>
    <property type="match status" value="1"/>
</dbReference>
<dbReference type="PANTHER" id="PTHR21085:SF0">
    <property type="entry name" value="CHORISMATE SYNTHASE"/>
    <property type="match status" value="1"/>
</dbReference>
<dbReference type="Pfam" id="PF01264">
    <property type="entry name" value="Chorismate_synt"/>
    <property type="match status" value="1"/>
</dbReference>
<dbReference type="PIRSF" id="PIRSF001456">
    <property type="entry name" value="Chorismate_synth"/>
    <property type="match status" value="1"/>
</dbReference>
<dbReference type="SUPFAM" id="SSF103263">
    <property type="entry name" value="Chorismate synthase, AroC"/>
    <property type="match status" value="1"/>
</dbReference>
<dbReference type="PROSITE" id="PS00787">
    <property type="entry name" value="CHORISMATE_SYNTHASE_1"/>
    <property type="match status" value="1"/>
</dbReference>
<dbReference type="PROSITE" id="PS00788">
    <property type="entry name" value="CHORISMATE_SYNTHASE_2"/>
    <property type="match status" value="1"/>
</dbReference>
<dbReference type="PROSITE" id="PS00789">
    <property type="entry name" value="CHORISMATE_SYNTHASE_3"/>
    <property type="match status" value="1"/>
</dbReference>